<dbReference type="EMBL" id="AE006468">
    <property type="protein sequence ID" value="AAL19440.1"/>
    <property type="molecule type" value="Genomic_DNA"/>
</dbReference>
<dbReference type="RefSeq" id="NP_459481.1">
    <property type="nucleotide sequence ID" value="NC_003197.2"/>
</dbReference>
<dbReference type="RefSeq" id="WP_001195023.1">
    <property type="nucleotide sequence ID" value="NC_003197.2"/>
</dbReference>
<dbReference type="SMR" id="P65992"/>
<dbReference type="STRING" id="99287.STM0486"/>
<dbReference type="PaxDb" id="99287-STM0486"/>
<dbReference type="GeneID" id="1252006"/>
<dbReference type="KEGG" id="stm:STM0486"/>
<dbReference type="PATRIC" id="fig|99287.12.peg.519"/>
<dbReference type="HOGENOM" id="CLU_060739_1_2_6"/>
<dbReference type="OMA" id="DVMAIEN"/>
<dbReference type="PhylomeDB" id="P65992"/>
<dbReference type="BioCyc" id="SENT99287:STM0486-MONOMER"/>
<dbReference type="Proteomes" id="UP000001014">
    <property type="component" value="Chromosome"/>
</dbReference>
<dbReference type="GO" id="GO:0003677">
    <property type="term" value="F:DNA binding"/>
    <property type="evidence" value="ECO:0007669"/>
    <property type="project" value="UniProtKB-UniRule"/>
</dbReference>
<dbReference type="GO" id="GO:0008270">
    <property type="term" value="F:zinc ion binding"/>
    <property type="evidence" value="ECO:0007669"/>
    <property type="project" value="UniProtKB-KW"/>
</dbReference>
<dbReference type="GO" id="GO:0006302">
    <property type="term" value="P:double-strand break repair"/>
    <property type="evidence" value="ECO:0000318"/>
    <property type="project" value="GO_Central"/>
</dbReference>
<dbReference type="GO" id="GO:0000725">
    <property type="term" value="P:recombinational repair"/>
    <property type="evidence" value="ECO:0000318"/>
    <property type="project" value="GO_Central"/>
</dbReference>
<dbReference type="CDD" id="cd01025">
    <property type="entry name" value="TOPRIM_recR"/>
    <property type="match status" value="1"/>
</dbReference>
<dbReference type="FunFam" id="1.10.8.420:FF:000001">
    <property type="entry name" value="Recombination protein RecR"/>
    <property type="match status" value="1"/>
</dbReference>
<dbReference type="FunFam" id="3.40.1360.10:FF:000001">
    <property type="entry name" value="Recombination protein RecR"/>
    <property type="match status" value="1"/>
</dbReference>
<dbReference type="Gene3D" id="3.40.1360.10">
    <property type="match status" value="1"/>
</dbReference>
<dbReference type="Gene3D" id="6.10.250.240">
    <property type="match status" value="1"/>
</dbReference>
<dbReference type="Gene3D" id="1.10.8.420">
    <property type="entry name" value="RecR Domain 1"/>
    <property type="match status" value="1"/>
</dbReference>
<dbReference type="HAMAP" id="MF_00017">
    <property type="entry name" value="RecR"/>
    <property type="match status" value="1"/>
</dbReference>
<dbReference type="InterPro" id="IPR000093">
    <property type="entry name" value="DNA_Rcmb_RecR"/>
</dbReference>
<dbReference type="InterPro" id="IPR023627">
    <property type="entry name" value="Rcmb_RecR"/>
</dbReference>
<dbReference type="InterPro" id="IPR015967">
    <property type="entry name" value="Rcmb_RecR_Znf"/>
</dbReference>
<dbReference type="InterPro" id="IPR006171">
    <property type="entry name" value="TOPRIM_dom"/>
</dbReference>
<dbReference type="InterPro" id="IPR034137">
    <property type="entry name" value="TOPRIM_RecR"/>
</dbReference>
<dbReference type="NCBIfam" id="TIGR00615">
    <property type="entry name" value="recR"/>
    <property type="match status" value="1"/>
</dbReference>
<dbReference type="PANTHER" id="PTHR30446">
    <property type="entry name" value="RECOMBINATION PROTEIN RECR"/>
    <property type="match status" value="1"/>
</dbReference>
<dbReference type="PANTHER" id="PTHR30446:SF0">
    <property type="entry name" value="RECOMBINATION PROTEIN RECR"/>
    <property type="match status" value="1"/>
</dbReference>
<dbReference type="Pfam" id="PF21175">
    <property type="entry name" value="RecR_C"/>
    <property type="match status" value="1"/>
</dbReference>
<dbReference type="Pfam" id="PF21176">
    <property type="entry name" value="RecR_HhH"/>
    <property type="match status" value="1"/>
</dbReference>
<dbReference type="Pfam" id="PF02132">
    <property type="entry name" value="RecR_ZnF"/>
    <property type="match status" value="1"/>
</dbReference>
<dbReference type="Pfam" id="PF13662">
    <property type="entry name" value="Toprim_4"/>
    <property type="match status" value="1"/>
</dbReference>
<dbReference type="SMART" id="SM00493">
    <property type="entry name" value="TOPRIM"/>
    <property type="match status" value="1"/>
</dbReference>
<dbReference type="SUPFAM" id="SSF111304">
    <property type="entry name" value="Recombination protein RecR"/>
    <property type="match status" value="1"/>
</dbReference>
<dbReference type="PROSITE" id="PS01300">
    <property type="entry name" value="RECR"/>
    <property type="match status" value="1"/>
</dbReference>
<dbReference type="PROSITE" id="PS50880">
    <property type="entry name" value="TOPRIM"/>
    <property type="match status" value="1"/>
</dbReference>
<keyword id="KW-0227">DNA damage</keyword>
<keyword id="KW-0233">DNA recombination</keyword>
<keyword id="KW-0234">DNA repair</keyword>
<keyword id="KW-0479">Metal-binding</keyword>
<keyword id="KW-1185">Reference proteome</keyword>
<keyword id="KW-0862">Zinc</keyword>
<keyword id="KW-0863">Zinc-finger</keyword>
<evidence type="ECO:0000255" key="1">
    <source>
        <dbReference type="HAMAP-Rule" id="MF_00017"/>
    </source>
</evidence>
<organism>
    <name type="scientific">Salmonella typhimurium (strain LT2 / SGSC1412 / ATCC 700720)</name>
    <dbReference type="NCBI Taxonomy" id="99287"/>
    <lineage>
        <taxon>Bacteria</taxon>
        <taxon>Pseudomonadati</taxon>
        <taxon>Pseudomonadota</taxon>
        <taxon>Gammaproteobacteria</taxon>
        <taxon>Enterobacterales</taxon>
        <taxon>Enterobacteriaceae</taxon>
        <taxon>Salmonella</taxon>
    </lineage>
</organism>
<sequence length="201" mass="21715">MQTSPLLTQLMEALRCLPGVGPKSAQRMAFTLLQRDRSGGMRLAQALTRAMSEIGHCADCRTFTEQDVCNICSNPRRQENGQICVVESPADIYAIEQTGQFSGRYFVLMGHLSPLDGIGPDDIGLDRLEQRLASEKISELILATNPTVEGEATANYIAELCAEAGVEASRIAHGVPVGGELEMVDGTTLSHSLAGRHKIIF</sequence>
<gene>
    <name evidence="1" type="primary">recR</name>
    <name type="ordered locus">STM0486</name>
</gene>
<proteinExistence type="inferred from homology"/>
<protein>
    <recommendedName>
        <fullName evidence="1">Recombination protein RecR</fullName>
    </recommendedName>
</protein>
<name>RECR_SALTY</name>
<reference key="1">
    <citation type="journal article" date="2001" name="Nature">
        <title>Complete genome sequence of Salmonella enterica serovar Typhimurium LT2.</title>
        <authorList>
            <person name="McClelland M."/>
            <person name="Sanderson K.E."/>
            <person name="Spieth J."/>
            <person name="Clifton S.W."/>
            <person name="Latreille P."/>
            <person name="Courtney L."/>
            <person name="Porwollik S."/>
            <person name="Ali J."/>
            <person name="Dante M."/>
            <person name="Du F."/>
            <person name="Hou S."/>
            <person name="Layman D."/>
            <person name="Leonard S."/>
            <person name="Nguyen C."/>
            <person name="Scott K."/>
            <person name="Holmes A."/>
            <person name="Grewal N."/>
            <person name="Mulvaney E."/>
            <person name="Ryan E."/>
            <person name="Sun H."/>
            <person name="Florea L."/>
            <person name="Miller W."/>
            <person name="Stoneking T."/>
            <person name="Nhan M."/>
            <person name="Waterston R."/>
            <person name="Wilson R.K."/>
        </authorList>
    </citation>
    <scope>NUCLEOTIDE SEQUENCE [LARGE SCALE GENOMIC DNA]</scope>
    <source>
        <strain>LT2 / SGSC1412 / ATCC 700720</strain>
    </source>
</reference>
<feature type="chain" id="PRO_0000190381" description="Recombination protein RecR">
    <location>
        <begin position="1"/>
        <end position="201"/>
    </location>
</feature>
<feature type="domain" description="Toprim" evidence="1">
    <location>
        <begin position="81"/>
        <end position="176"/>
    </location>
</feature>
<feature type="zinc finger region" description="C4-type" evidence="1">
    <location>
        <begin position="57"/>
        <end position="72"/>
    </location>
</feature>
<accession>P65992</accession>
<accession>Q8XG25</accession>
<comment type="function">
    <text evidence="1">May play a role in DNA repair. It seems to be involved in an RecBC-independent recombinational process of DNA repair. It may act with RecF and RecO.</text>
</comment>
<comment type="similarity">
    <text evidence="1">Belongs to the RecR family.</text>
</comment>